<protein>
    <recommendedName>
        <fullName evidence="1">33 kDa chaperonin</fullName>
    </recommendedName>
    <alternativeName>
        <fullName evidence="1">Heat shock protein 33 homolog</fullName>
        <shortName evidence="1">HSP33</shortName>
    </alternativeName>
</protein>
<proteinExistence type="inferred from homology"/>
<reference key="1">
    <citation type="journal article" date="2009" name="PLoS Genet.">
        <title>Organised genome dynamics in the Escherichia coli species results in highly diverse adaptive paths.</title>
        <authorList>
            <person name="Touchon M."/>
            <person name="Hoede C."/>
            <person name="Tenaillon O."/>
            <person name="Barbe V."/>
            <person name="Baeriswyl S."/>
            <person name="Bidet P."/>
            <person name="Bingen E."/>
            <person name="Bonacorsi S."/>
            <person name="Bouchier C."/>
            <person name="Bouvet O."/>
            <person name="Calteau A."/>
            <person name="Chiapello H."/>
            <person name="Clermont O."/>
            <person name="Cruveiller S."/>
            <person name="Danchin A."/>
            <person name="Diard M."/>
            <person name="Dossat C."/>
            <person name="Karoui M.E."/>
            <person name="Frapy E."/>
            <person name="Garry L."/>
            <person name="Ghigo J.M."/>
            <person name="Gilles A.M."/>
            <person name="Johnson J."/>
            <person name="Le Bouguenec C."/>
            <person name="Lescat M."/>
            <person name="Mangenot S."/>
            <person name="Martinez-Jehanne V."/>
            <person name="Matic I."/>
            <person name="Nassif X."/>
            <person name="Oztas S."/>
            <person name="Petit M.A."/>
            <person name="Pichon C."/>
            <person name="Rouy Z."/>
            <person name="Ruf C.S."/>
            <person name="Schneider D."/>
            <person name="Tourret J."/>
            <person name="Vacherie B."/>
            <person name="Vallenet D."/>
            <person name="Medigue C."/>
            <person name="Rocha E.P.C."/>
            <person name="Denamur E."/>
        </authorList>
    </citation>
    <scope>NUCLEOTIDE SEQUENCE [LARGE SCALE GENOMIC DNA]</scope>
    <source>
        <strain>UMN026 / ExPEC</strain>
    </source>
</reference>
<gene>
    <name evidence="1" type="primary">hslO</name>
    <name type="ordered locus">ECUMN_3859</name>
</gene>
<comment type="function">
    <text evidence="1">Redox regulated molecular chaperone. Protects both thermally unfolding and oxidatively damaged proteins from irreversible aggregation. Plays an important role in the bacterial defense system toward oxidative stress.</text>
</comment>
<comment type="subcellular location">
    <subcellularLocation>
        <location evidence="1">Cytoplasm</location>
    </subcellularLocation>
</comment>
<comment type="PTM">
    <text evidence="1">Under oxidizing conditions two disulfide bonds are formed involving the reactive cysteines. Under reducing conditions zinc is bound to the reactive cysteines and the protein is inactive.</text>
</comment>
<comment type="similarity">
    <text evidence="1">Belongs to the HSP33 family.</text>
</comment>
<dbReference type="EMBL" id="CU928163">
    <property type="protein sequence ID" value="CAR15005.1"/>
    <property type="molecule type" value="Genomic_DNA"/>
</dbReference>
<dbReference type="RefSeq" id="WP_001135575.1">
    <property type="nucleotide sequence ID" value="NC_011751.1"/>
</dbReference>
<dbReference type="RefSeq" id="YP_002414510.1">
    <property type="nucleotide sequence ID" value="NC_011751.1"/>
</dbReference>
<dbReference type="SMR" id="B7NE05"/>
<dbReference type="STRING" id="585056.ECUMN_3859"/>
<dbReference type="KEGG" id="eum:ECUMN_3859"/>
<dbReference type="PATRIC" id="fig|585056.7.peg.4031"/>
<dbReference type="HOGENOM" id="CLU_054493_0_0_6"/>
<dbReference type="Proteomes" id="UP000007097">
    <property type="component" value="Chromosome"/>
</dbReference>
<dbReference type="GO" id="GO:0005737">
    <property type="term" value="C:cytoplasm"/>
    <property type="evidence" value="ECO:0007669"/>
    <property type="project" value="UniProtKB-SubCell"/>
</dbReference>
<dbReference type="GO" id="GO:0044183">
    <property type="term" value="F:protein folding chaperone"/>
    <property type="evidence" value="ECO:0007669"/>
    <property type="project" value="TreeGrafter"/>
</dbReference>
<dbReference type="GO" id="GO:0051082">
    <property type="term" value="F:unfolded protein binding"/>
    <property type="evidence" value="ECO:0007669"/>
    <property type="project" value="UniProtKB-UniRule"/>
</dbReference>
<dbReference type="GO" id="GO:0042026">
    <property type="term" value="P:protein refolding"/>
    <property type="evidence" value="ECO:0007669"/>
    <property type="project" value="TreeGrafter"/>
</dbReference>
<dbReference type="CDD" id="cd00498">
    <property type="entry name" value="Hsp33"/>
    <property type="match status" value="1"/>
</dbReference>
<dbReference type="FunFam" id="3.55.30.10:FF:000001">
    <property type="entry name" value="33 kDa chaperonin"/>
    <property type="match status" value="1"/>
</dbReference>
<dbReference type="Gene3D" id="1.10.287.480">
    <property type="entry name" value="helix hairpin bin"/>
    <property type="match status" value="1"/>
</dbReference>
<dbReference type="Gene3D" id="3.55.30.10">
    <property type="entry name" value="Hsp33 domain"/>
    <property type="match status" value="1"/>
</dbReference>
<dbReference type="Gene3D" id="3.90.1280.10">
    <property type="entry name" value="HSP33 redox switch-like"/>
    <property type="match status" value="1"/>
</dbReference>
<dbReference type="HAMAP" id="MF_00117">
    <property type="entry name" value="HslO"/>
    <property type="match status" value="1"/>
</dbReference>
<dbReference type="InterPro" id="IPR000397">
    <property type="entry name" value="Heat_shock_Hsp33"/>
</dbReference>
<dbReference type="InterPro" id="IPR016154">
    <property type="entry name" value="Heat_shock_Hsp33_C"/>
</dbReference>
<dbReference type="InterPro" id="IPR016153">
    <property type="entry name" value="Heat_shock_Hsp33_N"/>
</dbReference>
<dbReference type="InterPro" id="IPR023212">
    <property type="entry name" value="Hsp33_helix_hairpin_bin_dom_sf"/>
</dbReference>
<dbReference type="NCBIfam" id="NF001033">
    <property type="entry name" value="PRK00114.1"/>
    <property type="match status" value="1"/>
</dbReference>
<dbReference type="PANTHER" id="PTHR30111">
    <property type="entry name" value="33 KDA CHAPERONIN"/>
    <property type="match status" value="1"/>
</dbReference>
<dbReference type="PANTHER" id="PTHR30111:SF1">
    <property type="entry name" value="33 KDA CHAPERONIN"/>
    <property type="match status" value="1"/>
</dbReference>
<dbReference type="Pfam" id="PF01430">
    <property type="entry name" value="HSP33"/>
    <property type="match status" value="1"/>
</dbReference>
<dbReference type="PIRSF" id="PIRSF005261">
    <property type="entry name" value="Heat_shock_Hsp33"/>
    <property type="match status" value="1"/>
</dbReference>
<dbReference type="SUPFAM" id="SSF64397">
    <property type="entry name" value="Hsp33 domain"/>
    <property type="match status" value="1"/>
</dbReference>
<dbReference type="SUPFAM" id="SSF118352">
    <property type="entry name" value="HSP33 redox switch-like"/>
    <property type="match status" value="1"/>
</dbReference>
<sequence length="292" mass="32565">MPQHDQLHRYLFENFAVRGELVTVSETLQQILENHDYPQPVKNVLAELLVATSLLTATLKFDGDITVQLQGDGPMNLAVINGNNNQQMRGVARVQGEIPENADLKTLVGNGYVVITITPSEGERYQGVVGLEGDTLAACLEDYFMRSEQLPTRLFIRTGDVDGKPAAGGMLLQVMPAQNAQQDDFDHLATLTETIKTEELLTLPANEVLWRLYHEEEVTVYDPQDVEFKCTCSRERCADALKTLPDEEVDSILTEDGEIDMHCDYCGNHYLFNAMDIAEIRNNASPADPQVH</sequence>
<evidence type="ECO:0000255" key="1">
    <source>
        <dbReference type="HAMAP-Rule" id="MF_00117"/>
    </source>
</evidence>
<keyword id="KW-0143">Chaperone</keyword>
<keyword id="KW-0963">Cytoplasm</keyword>
<keyword id="KW-1015">Disulfide bond</keyword>
<keyword id="KW-0676">Redox-active center</keyword>
<keyword id="KW-0346">Stress response</keyword>
<keyword id="KW-0862">Zinc</keyword>
<accession>B7NE05</accession>
<feature type="chain" id="PRO_1000190459" description="33 kDa chaperonin">
    <location>
        <begin position="1"/>
        <end position="292"/>
    </location>
</feature>
<feature type="disulfide bond" description="Redox-active" evidence="1">
    <location>
        <begin position="230"/>
        <end position="232"/>
    </location>
</feature>
<feature type="disulfide bond" description="Redox-active" evidence="1">
    <location>
        <begin position="263"/>
        <end position="266"/>
    </location>
</feature>
<name>HSLO_ECOLU</name>
<organism>
    <name type="scientific">Escherichia coli O17:K52:H18 (strain UMN026 / ExPEC)</name>
    <dbReference type="NCBI Taxonomy" id="585056"/>
    <lineage>
        <taxon>Bacteria</taxon>
        <taxon>Pseudomonadati</taxon>
        <taxon>Pseudomonadota</taxon>
        <taxon>Gammaproteobacteria</taxon>
        <taxon>Enterobacterales</taxon>
        <taxon>Enterobacteriaceae</taxon>
        <taxon>Escherichia</taxon>
    </lineage>
</organism>